<keyword id="KW-1035">Host cytoplasm</keyword>
<name>NS2A_CVMJH</name>
<dbReference type="EMBL" id="M34035">
    <property type="protein sequence ID" value="AAA46464.1"/>
    <property type="molecule type" value="Genomic_RNA"/>
</dbReference>
<dbReference type="EMBL" id="M28348">
    <property type="protein sequence ID" value="AAA46441.1"/>
    <property type="molecule type" value="Genomic_RNA"/>
</dbReference>
<dbReference type="EMBL" id="M57954">
    <property type="protein sequence ID" value="AAA46463.1"/>
    <property type="molecule type" value="mRNA"/>
</dbReference>
<dbReference type="PIR" id="A36542">
    <property type="entry name" value="MNIHJH"/>
</dbReference>
<dbReference type="RefSeq" id="YP_209231.1">
    <property type="nucleotide sequence ID" value="AC_000192.1"/>
</dbReference>
<dbReference type="SMR" id="P26625"/>
<dbReference type="KEGG" id="vg:3283264"/>
<dbReference type="Proteomes" id="UP000007193">
    <property type="component" value="Genome"/>
</dbReference>
<dbReference type="GO" id="GO:0030430">
    <property type="term" value="C:host cell cytoplasm"/>
    <property type="evidence" value="ECO:0007669"/>
    <property type="project" value="UniProtKB-SubCell"/>
</dbReference>
<dbReference type="Gene3D" id="3.90.1140.10">
    <property type="entry name" value="Cyclic phosphodiesterase"/>
    <property type="match status" value="1"/>
</dbReference>
<dbReference type="InterPro" id="IPR007878">
    <property type="entry name" value="Coronavirus_NS2A"/>
</dbReference>
<dbReference type="InterPro" id="IPR009097">
    <property type="entry name" value="Cyclic_Pdiesterase"/>
</dbReference>
<dbReference type="InterPro" id="IPR039573">
    <property type="entry name" value="NS2A-like"/>
</dbReference>
<dbReference type="Pfam" id="PF05213">
    <property type="entry name" value="Corona_NS2A"/>
    <property type="match status" value="1"/>
</dbReference>
<dbReference type="PIRSF" id="PIRSF003890">
    <property type="entry name" value="LigT_coronavirus"/>
    <property type="match status" value="1"/>
</dbReference>
<dbReference type="SUPFAM" id="SSF55144">
    <property type="entry name" value="LigT-like"/>
    <property type="match status" value="1"/>
</dbReference>
<reference key="1">
    <citation type="journal article" date="1990" name="J. Virol.">
        <title>Murine coronavirus nonstructural protein ns2 is not essential for virus replication in transformed cells.</title>
        <authorList>
            <person name="Schwarz B."/>
            <person name="Routledge E."/>
            <person name="Siddell S.G."/>
        </authorList>
    </citation>
    <scope>NUCLEOTIDE SEQUENCE [GENOMIC RNA / MRNA]</scope>
</reference>
<reference key="2">
    <citation type="journal article" date="1989" name="J. Virol.">
        <title>Identification of a new transcriptional initiation site and the corresponding functional gene 2b in the murine coronavirus RNA genome.</title>
        <authorList>
            <person name="Shieh C.-K."/>
            <person name="Lee H.-J."/>
            <person name="Yokomori K."/>
            <person name="la Monica N."/>
            <person name="Makino S."/>
            <person name="Lai M.M.C."/>
        </authorList>
    </citation>
    <scope>NUCLEOTIDE SEQUENCE [GENOMIC RNA]</scope>
</reference>
<evidence type="ECO:0000250" key="1"/>
<evidence type="ECO:0000305" key="2"/>
<accession>P26625</accession>
<gene>
    <name type="ORF">2a</name>
</gene>
<feature type="chain" id="PRO_0000106061" description="Non-structural protein 2a">
    <location>
        <begin position="1"/>
        <end position="265"/>
    </location>
</feature>
<feature type="sequence conflict" description="In Ref. 2; AAA46441." evidence="2" ref="2">
    <original>G</original>
    <variation>D</variation>
    <location>
        <position position="177"/>
    </location>
</feature>
<sequence>MAARMAFADKPNHFINFPLAQFSGFMGKYLKLQSQLVEMGLDCKLQKVPHVSITLLDIKADQYKQVEFAIQEIIDDLAAYEGDIVFDNPHMLGRCLVLDVKGFEELHEDIVEILRRRGCTADQSRQWIPHCTVAQFDEEKEIKEMQFYFKLPFYLKHNNLLTDARLELVKIGSSKVGGFYCSELSIWCGERLCYKPPTPKFSDIFGYCCIDKIRGDLEIGDLPPDDEEAWAELSYHYQRNTYFFRHVHDNSIYFRTVCRMKGCMC</sequence>
<protein>
    <recommendedName>
        <fullName>Non-structural protein 2a</fullName>
        <shortName>ns2a</shortName>
    </recommendedName>
    <alternativeName>
        <fullName>30 kDa accessory protein</fullName>
    </alternativeName>
    <alternativeName>
        <fullName>30 kDa non-structural protein</fullName>
    </alternativeName>
    <alternativeName>
        <fullName>ns2</fullName>
    </alternativeName>
    <alternativeName>
        <fullName>p30</fullName>
    </alternativeName>
</protein>
<comment type="function">
    <text>Not essential for virus replication in transformed murine cells.</text>
</comment>
<comment type="subcellular location">
    <subcellularLocation>
        <location evidence="1">Host cytoplasm</location>
    </subcellularLocation>
</comment>
<comment type="similarity">
    <text evidence="2">Belongs to the coronaviruses ns2a protein family.</text>
</comment>
<organismHost>
    <name type="scientific">Mus musculus</name>
    <name type="common">Mouse</name>
    <dbReference type="NCBI Taxonomy" id="10090"/>
</organismHost>
<proteinExistence type="evidence at transcript level"/>
<organism>
    <name type="scientific">Murine coronavirus (strain JHM)</name>
    <name type="common">MHV-JHM</name>
    <name type="synonym">Murine hepatitis virus</name>
    <dbReference type="NCBI Taxonomy" id="11144"/>
    <lineage>
        <taxon>Viruses</taxon>
        <taxon>Riboviria</taxon>
        <taxon>Orthornavirae</taxon>
        <taxon>Pisuviricota</taxon>
        <taxon>Pisoniviricetes</taxon>
        <taxon>Nidovirales</taxon>
        <taxon>Cornidovirineae</taxon>
        <taxon>Coronaviridae</taxon>
        <taxon>Orthocoronavirinae</taxon>
        <taxon>Betacoronavirus</taxon>
        <taxon>Embecovirus</taxon>
        <taxon>Murine coronavirus</taxon>
    </lineage>
</organism>